<accession>A9AI95</accession>
<organism>
    <name type="scientific">Burkholderia multivorans (strain ATCC 17616 / 249)</name>
    <dbReference type="NCBI Taxonomy" id="395019"/>
    <lineage>
        <taxon>Bacteria</taxon>
        <taxon>Pseudomonadati</taxon>
        <taxon>Pseudomonadota</taxon>
        <taxon>Betaproteobacteria</taxon>
        <taxon>Burkholderiales</taxon>
        <taxon>Burkholderiaceae</taxon>
        <taxon>Burkholderia</taxon>
        <taxon>Burkholderia cepacia complex</taxon>
    </lineage>
</organism>
<feature type="chain" id="PRO_1000091084" description="UDP-N-acetylmuramate--L-alanine ligase">
    <location>
        <begin position="1"/>
        <end position="465"/>
    </location>
</feature>
<feature type="binding site" evidence="1">
    <location>
        <begin position="112"/>
        <end position="118"/>
    </location>
    <ligand>
        <name>ATP</name>
        <dbReference type="ChEBI" id="CHEBI:30616"/>
    </ligand>
</feature>
<comment type="function">
    <text evidence="1">Cell wall formation.</text>
</comment>
<comment type="catalytic activity">
    <reaction evidence="1">
        <text>UDP-N-acetyl-alpha-D-muramate + L-alanine + ATP = UDP-N-acetyl-alpha-D-muramoyl-L-alanine + ADP + phosphate + H(+)</text>
        <dbReference type="Rhea" id="RHEA:23372"/>
        <dbReference type="ChEBI" id="CHEBI:15378"/>
        <dbReference type="ChEBI" id="CHEBI:30616"/>
        <dbReference type="ChEBI" id="CHEBI:43474"/>
        <dbReference type="ChEBI" id="CHEBI:57972"/>
        <dbReference type="ChEBI" id="CHEBI:70757"/>
        <dbReference type="ChEBI" id="CHEBI:83898"/>
        <dbReference type="ChEBI" id="CHEBI:456216"/>
        <dbReference type="EC" id="6.3.2.8"/>
    </reaction>
</comment>
<comment type="pathway">
    <text evidence="1">Cell wall biogenesis; peptidoglycan biosynthesis.</text>
</comment>
<comment type="subcellular location">
    <subcellularLocation>
        <location evidence="1">Cytoplasm</location>
    </subcellularLocation>
</comment>
<comment type="similarity">
    <text evidence="1">Belongs to the MurCDEF family.</text>
</comment>
<evidence type="ECO:0000255" key="1">
    <source>
        <dbReference type="HAMAP-Rule" id="MF_00046"/>
    </source>
</evidence>
<keyword id="KW-0067">ATP-binding</keyword>
<keyword id="KW-0131">Cell cycle</keyword>
<keyword id="KW-0132">Cell division</keyword>
<keyword id="KW-0133">Cell shape</keyword>
<keyword id="KW-0961">Cell wall biogenesis/degradation</keyword>
<keyword id="KW-0963">Cytoplasm</keyword>
<keyword id="KW-0436">Ligase</keyword>
<keyword id="KW-0547">Nucleotide-binding</keyword>
<keyword id="KW-0573">Peptidoglycan synthesis</keyword>
<keyword id="KW-1185">Reference proteome</keyword>
<name>MURC_BURM1</name>
<reference key="1">
    <citation type="submission" date="2007-10" db="EMBL/GenBank/DDBJ databases">
        <title>Complete sequence of chromosome 1 of Burkholderia multivorans ATCC 17616.</title>
        <authorList>
            <person name="Copeland A."/>
            <person name="Lucas S."/>
            <person name="Lapidus A."/>
            <person name="Barry K."/>
            <person name="Glavina del Rio T."/>
            <person name="Dalin E."/>
            <person name="Tice H."/>
            <person name="Pitluck S."/>
            <person name="Chain P."/>
            <person name="Malfatti S."/>
            <person name="Shin M."/>
            <person name="Vergez L."/>
            <person name="Schmutz J."/>
            <person name="Larimer F."/>
            <person name="Land M."/>
            <person name="Hauser L."/>
            <person name="Kyrpides N."/>
            <person name="Kim E."/>
            <person name="Tiedje J."/>
            <person name="Richardson P."/>
        </authorList>
    </citation>
    <scope>NUCLEOTIDE SEQUENCE [LARGE SCALE GENOMIC DNA]</scope>
    <source>
        <strain>ATCC 17616 / 249</strain>
    </source>
</reference>
<reference key="2">
    <citation type="submission" date="2007-04" db="EMBL/GenBank/DDBJ databases">
        <title>Complete genome sequence of Burkholderia multivorans ATCC 17616.</title>
        <authorList>
            <person name="Ohtsubo Y."/>
            <person name="Yamashita A."/>
            <person name="Kurokawa K."/>
            <person name="Takami H."/>
            <person name="Yuhara S."/>
            <person name="Nishiyama E."/>
            <person name="Endo R."/>
            <person name="Miyazaki R."/>
            <person name="Ono A."/>
            <person name="Yano K."/>
            <person name="Ito M."/>
            <person name="Sota M."/>
            <person name="Yuji N."/>
            <person name="Hattori M."/>
            <person name="Tsuda M."/>
        </authorList>
    </citation>
    <scope>NUCLEOTIDE SEQUENCE [LARGE SCALE GENOMIC DNA]</scope>
    <source>
        <strain>ATCC 17616 / 249</strain>
    </source>
</reference>
<sequence>MKHIVKHIHFVGIGGAGMSGIAEVLVNLGYQVSGSDLARNAVTDRLAALGARIAIGHDAANIEGANAVVVSTAVRSDNPEVLAARAQRVPIVQRAVMLAELMRLKQGIAIAGTHGKTTTTSLVASVLAAGGLDPTFVIGGRLISAGANARLGTGDFIVAEADESDASFLNLYPVIEVITNIDADHMDTYGHDFARLKQAFIEFTQRLPFYGSAVVCVDDPNVRQIIPFISKPVVRYGLSPDAQVRAEDIDARDGRMHFTVIREGRAPLAVVLNLPGLHNVQNALAAIAIATDLGVSDDAIQQALAEFNGVGRRFQRYGDVPTADGGRYTLIDDYGHHPVEMAATIAAARGAFPGRRLVLAFQPHRYTRTRDCFDDFVNVLSTVDALVLTEVYAAGEAAIATANGDALSRALRAAGKVEPVFVETVDALPEALAKVAQDGDVVITMGAGSIGGVPAKIVQNTQQKG</sequence>
<proteinExistence type="inferred from homology"/>
<dbReference type="EC" id="6.3.2.8" evidence="1"/>
<dbReference type="EMBL" id="CP000868">
    <property type="protein sequence ID" value="ABX16519.1"/>
    <property type="molecule type" value="Genomic_DNA"/>
</dbReference>
<dbReference type="EMBL" id="AP009385">
    <property type="protein sequence ID" value="BAG42371.1"/>
    <property type="molecule type" value="Genomic_DNA"/>
</dbReference>
<dbReference type="RefSeq" id="WP_012214185.1">
    <property type="nucleotide sequence ID" value="NC_010084.1"/>
</dbReference>
<dbReference type="SMR" id="A9AI95"/>
<dbReference type="STRING" id="395019.BMULJ_00403"/>
<dbReference type="GeneID" id="89568843"/>
<dbReference type="KEGG" id="bmj:BMULJ_00403"/>
<dbReference type="KEGG" id="bmu:Bmul_2835"/>
<dbReference type="eggNOG" id="COG0773">
    <property type="taxonomic scope" value="Bacteria"/>
</dbReference>
<dbReference type="HOGENOM" id="CLU_028104_2_2_4"/>
<dbReference type="UniPathway" id="UPA00219"/>
<dbReference type="Proteomes" id="UP000008815">
    <property type="component" value="Chromosome 1"/>
</dbReference>
<dbReference type="GO" id="GO:0005737">
    <property type="term" value="C:cytoplasm"/>
    <property type="evidence" value="ECO:0007669"/>
    <property type="project" value="UniProtKB-SubCell"/>
</dbReference>
<dbReference type="GO" id="GO:0005524">
    <property type="term" value="F:ATP binding"/>
    <property type="evidence" value="ECO:0007669"/>
    <property type="project" value="UniProtKB-UniRule"/>
</dbReference>
<dbReference type="GO" id="GO:0008763">
    <property type="term" value="F:UDP-N-acetylmuramate-L-alanine ligase activity"/>
    <property type="evidence" value="ECO:0007669"/>
    <property type="project" value="UniProtKB-UniRule"/>
</dbReference>
<dbReference type="GO" id="GO:0051301">
    <property type="term" value="P:cell division"/>
    <property type="evidence" value="ECO:0007669"/>
    <property type="project" value="UniProtKB-KW"/>
</dbReference>
<dbReference type="GO" id="GO:0071555">
    <property type="term" value="P:cell wall organization"/>
    <property type="evidence" value="ECO:0007669"/>
    <property type="project" value="UniProtKB-KW"/>
</dbReference>
<dbReference type="GO" id="GO:0009252">
    <property type="term" value="P:peptidoglycan biosynthetic process"/>
    <property type="evidence" value="ECO:0007669"/>
    <property type="project" value="UniProtKB-UniRule"/>
</dbReference>
<dbReference type="GO" id="GO:0008360">
    <property type="term" value="P:regulation of cell shape"/>
    <property type="evidence" value="ECO:0007669"/>
    <property type="project" value="UniProtKB-KW"/>
</dbReference>
<dbReference type="FunFam" id="3.40.1190.10:FF:000001">
    <property type="entry name" value="UDP-N-acetylmuramate--L-alanine ligase"/>
    <property type="match status" value="1"/>
</dbReference>
<dbReference type="Gene3D" id="3.90.190.20">
    <property type="entry name" value="Mur ligase, C-terminal domain"/>
    <property type="match status" value="1"/>
</dbReference>
<dbReference type="Gene3D" id="3.40.1190.10">
    <property type="entry name" value="Mur-like, catalytic domain"/>
    <property type="match status" value="1"/>
</dbReference>
<dbReference type="Gene3D" id="3.40.50.720">
    <property type="entry name" value="NAD(P)-binding Rossmann-like Domain"/>
    <property type="match status" value="1"/>
</dbReference>
<dbReference type="HAMAP" id="MF_00046">
    <property type="entry name" value="MurC"/>
    <property type="match status" value="1"/>
</dbReference>
<dbReference type="InterPro" id="IPR036565">
    <property type="entry name" value="Mur-like_cat_sf"/>
</dbReference>
<dbReference type="InterPro" id="IPR004101">
    <property type="entry name" value="Mur_ligase_C"/>
</dbReference>
<dbReference type="InterPro" id="IPR036615">
    <property type="entry name" value="Mur_ligase_C_dom_sf"/>
</dbReference>
<dbReference type="InterPro" id="IPR013221">
    <property type="entry name" value="Mur_ligase_cen"/>
</dbReference>
<dbReference type="InterPro" id="IPR000713">
    <property type="entry name" value="Mur_ligase_N"/>
</dbReference>
<dbReference type="InterPro" id="IPR050061">
    <property type="entry name" value="MurCDEF_pg_biosynth"/>
</dbReference>
<dbReference type="InterPro" id="IPR005758">
    <property type="entry name" value="UDP-N-AcMur_Ala_ligase_MurC"/>
</dbReference>
<dbReference type="NCBIfam" id="TIGR01082">
    <property type="entry name" value="murC"/>
    <property type="match status" value="1"/>
</dbReference>
<dbReference type="PANTHER" id="PTHR43445:SF3">
    <property type="entry name" value="UDP-N-ACETYLMURAMATE--L-ALANINE LIGASE"/>
    <property type="match status" value="1"/>
</dbReference>
<dbReference type="PANTHER" id="PTHR43445">
    <property type="entry name" value="UDP-N-ACETYLMURAMATE--L-ALANINE LIGASE-RELATED"/>
    <property type="match status" value="1"/>
</dbReference>
<dbReference type="Pfam" id="PF01225">
    <property type="entry name" value="Mur_ligase"/>
    <property type="match status" value="1"/>
</dbReference>
<dbReference type="Pfam" id="PF02875">
    <property type="entry name" value="Mur_ligase_C"/>
    <property type="match status" value="1"/>
</dbReference>
<dbReference type="Pfam" id="PF08245">
    <property type="entry name" value="Mur_ligase_M"/>
    <property type="match status" value="1"/>
</dbReference>
<dbReference type="SUPFAM" id="SSF51984">
    <property type="entry name" value="MurCD N-terminal domain"/>
    <property type="match status" value="1"/>
</dbReference>
<dbReference type="SUPFAM" id="SSF53623">
    <property type="entry name" value="MurD-like peptide ligases, catalytic domain"/>
    <property type="match status" value="1"/>
</dbReference>
<dbReference type="SUPFAM" id="SSF53244">
    <property type="entry name" value="MurD-like peptide ligases, peptide-binding domain"/>
    <property type="match status" value="1"/>
</dbReference>
<protein>
    <recommendedName>
        <fullName evidence="1">UDP-N-acetylmuramate--L-alanine ligase</fullName>
        <ecNumber evidence="1">6.3.2.8</ecNumber>
    </recommendedName>
    <alternativeName>
        <fullName evidence="1">UDP-N-acetylmuramoyl-L-alanine synthetase</fullName>
    </alternativeName>
</protein>
<gene>
    <name evidence="1" type="primary">murC</name>
    <name type="ordered locus">Bmul_2835</name>
    <name type="ordered locus">BMULJ_00403</name>
</gene>